<dbReference type="EC" id="1.8.4.11" evidence="1"/>
<dbReference type="EMBL" id="AM295007">
    <property type="protein sequence ID" value="CAM30807.1"/>
    <property type="molecule type" value="Genomic_DNA"/>
</dbReference>
<dbReference type="RefSeq" id="WP_002985759.1">
    <property type="nucleotide sequence ID" value="NC_009332.1"/>
</dbReference>
<dbReference type="SMR" id="A2RG28"/>
<dbReference type="KEGG" id="spf:SpyM51486"/>
<dbReference type="HOGENOM" id="CLU_031040_10_1_9"/>
<dbReference type="GO" id="GO:0033744">
    <property type="term" value="F:L-methionine:thioredoxin-disulfide S-oxidoreductase activity"/>
    <property type="evidence" value="ECO:0007669"/>
    <property type="project" value="RHEA"/>
</dbReference>
<dbReference type="GO" id="GO:0008113">
    <property type="term" value="F:peptide-methionine (S)-S-oxide reductase activity"/>
    <property type="evidence" value="ECO:0007669"/>
    <property type="project" value="UniProtKB-UniRule"/>
</dbReference>
<dbReference type="GO" id="GO:0036211">
    <property type="term" value="P:protein modification process"/>
    <property type="evidence" value="ECO:0007669"/>
    <property type="project" value="UniProtKB-UniRule"/>
</dbReference>
<dbReference type="Gene3D" id="3.30.1060.10">
    <property type="entry name" value="Peptide methionine sulphoxide reductase MsrA"/>
    <property type="match status" value="1"/>
</dbReference>
<dbReference type="HAMAP" id="MF_01401">
    <property type="entry name" value="MsrA"/>
    <property type="match status" value="1"/>
</dbReference>
<dbReference type="InterPro" id="IPR002569">
    <property type="entry name" value="Met_Sox_Rdtase_MsrA_dom"/>
</dbReference>
<dbReference type="InterPro" id="IPR036509">
    <property type="entry name" value="Met_Sox_Rdtase_MsrA_sf"/>
</dbReference>
<dbReference type="NCBIfam" id="TIGR00401">
    <property type="entry name" value="msrA"/>
    <property type="match status" value="1"/>
</dbReference>
<dbReference type="PANTHER" id="PTHR43774">
    <property type="entry name" value="PEPTIDE METHIONINE SULFOXIDE REDUCTASE"/>
    <property type="match status" value="1"/>
</dbReference>
<dbReference type="PANTHER" id="PTHR43774:SF1">
    <property type="entry name" value="PEPTIDE METHIONINE SULFOXIDE REDUCTASE MSRA 2"/>
    <property type="match status" value="1"/>
</dbReference>
<dbReference type="Pfam" id="PF01625">
    <property type="entry name" value="PMSR"/>
    <property type="match status" value="1"/>
</dbReference>
<dbReference type="SUPFAM" id="SSF55068">
    <property type="entry name" value="Peptide methionine sulfoxide reductase"/>
    <property type="match status" value="1"/>
</dbReference>
<keyword id="KW-0560">Oxidoreductase</keyword>
<sequence>MERAIFAGGCFWCMVQPFEEQAGILSVRSGYTGGHLPNPSYEQVCAKTTGHTEAVEIIFDPEEISYKELVELYWAQTDPTDAFGQFEDRGDNYRPVIYYTTERQKEIAEQSKANLQASGRFDQPIVTTIEPAEPFYLAEDYHQGFYKKNPKRYAQSSAIRHQFLEENWS</sequence>
<feature type="chain" id="PRO_1000068368" description="Peptide methionine sulfoxide reductase MsrA">
    <location>
        <begin position="1"/>
        <end position="169"/>
    </location>
</feature>
<feature type="active site" evidence="1">
    <location>
        <position position="10"/>
    </location>
</feature>
<protein>
    <recommendedName>
        <fullName evidence="1">Peptide methionine sulfoxide reductase MsrA</fullName>
        <shortName evidence="1">Protein-methionine-S-oxide reductase</shortName>
        <ecNumber evidence="1">1.8.4.11</ecNumber>
    </recommendedName>
    <alternativeName>
        <fullName evidence="1">Peptide-methionine (S)-S-oxide reductase</fullName>
        <shortName evidence="1">Peptide Met(O) reductase</shortName>
    </alternativeName>
</protein>
<reference key="1">
    <citation type="journal article" date="2007" name="J. Bacteriol.">
        <title>Complete genome of acute rheumatic fever-associated serotype M5 Streptococcus pyogenes strain Manfredo.</title>
        <authorList>
            <person name="Holden M.T.G."/>
            <person name="Scott A."/>
            <person name="Cherevach I."/>
            <person name="Chillingworth T."/>
            <person name="Churcher C."/>
            <person name="Cronin A."/>
            <person name="Dowd L."/>
            <person name="Feltwell T."/>
            <person name="Hamlin N."/>
            <person name="Holroyd S."/>
            <person name="Jagels K."/>
            <person name="Moule S."/>
            <person name="Mungall K."/>
            <person name="Quail M.A."/>
            <person name="Price C."/>
            <person name="Rabbinowitsch E."/>
            <person name="Sharp S."/>
            <person name="Skelton J."/>
            <person name="Whitehead S."/>
            <person name="Barrell B.G."/>
            <person name="Kehoe M."/>
            <person name="Parkhill J."/>
        </authorList>
    </citation>
    <scope>NUCLEOTIDE SEQUENCE [LARGE SCALE GENOMIC DNA]</scope>
    <source>
        <strain>Manfredo</strain>
    </source>
</reference>
<proteinExistence type="inferred from homology"/>
<name>MSRA_STRPG</name>
<gene>
    <name evidence="1" type="primary">msrA</name>
    <name type="ordered locus">SpyM51486</name>
</gene>
<organism>
    <name type="scientific">Streptococcus pyogenes serotype M5 (strain Manfredo)</name>
    <dbReference type="NCBI Taxonomy" id="160491"/>
    <lineage>
        <taxon>Bacteria</taxon>
        <taxon>Bacillati</taxon>
        <taxon>Bacillota</taxon>
        <taxon>Bacilli</taxon>
        <taxon>Lactobacillales</taxon>
        <taxon>Streptococcaceae</taxon>
        <taxon>Streptococcus</taxon>
    </lineage>
</organism>
<accession>A2RG28</accession>
<evidence type="ECO:0000255" key="1">
    <source>
        <dbReference type="HAMAP-Rule" id="MF_01401"/>
    </source>
</evidence>
<comment type="function">
    <text evidence="1">Has an important function as a repair enzyme for proteins that have been inactivated by oxidation. Catalyzes the reversible oxidation-reduction of methionine sulfoxide in proteins to methionine.</text>
</comment>
<comment type="catalytic activity">
    <reaction evidence="1">
        <text>L-methionyl-[protein] + [thioredoxin]-disulfide + H2O = L-methionyl-(S)-S-oxide-[protein] + [thioredoxin]-dithiol</text>
        <dbReference type="Rhea" id="RHEA:14217"/>
        <dbReference type="Rhea" id="RHEA-COMP:10698"/>
        <dbReference type="Rhea" id="RHEA-COMP:10700"/>
        <dbReference type="Rhea" id="RHEA-COMP:12313"/>
        <dbReference type="Rhea" id="RHEA-COMP:12315"/>
        <dbReference type="ChEBI" id="CHEBI:15377"/>
        <dbReference type="ChEBI" id="CHEBI:16044"/>
        <dbReference type="ChEBI" id="CHEBI:29950"/>
        <dbReference type="ChEBI" id="CHEBI:44120"/>
        <dbReference type="ChEBI" id="CHEBI:50058"/>
        <dbReference type="EC" id="1.8.4.11"/>
    </reaction>
</comment>
<comment type="catalytic activity">
    <reaction evidence="1">
        <text>[thioredoxin]-disulfide + L-methionine + H2O = L-methionine (S)-S-oxide + [thioredoxin]-dithiol</text>
        <dbReference type="Rhea" id="RHEA:19993"/>
        <dbReference type="Rhea" id="RHEA-COMP:10698"/>
        <dbReference type="Rhea" id="RHEA-COMP:10700"/>
        <dbReference type="ChEBI" id="CHEBI:15377"/>
        <dbReference type="ChEBI" id="CHEBI:29950"/>
        <dbReference type="ChEBI" id="CHEBI:50058"/>
        <dbReference type="ChEBI" id="CHEBI:57844"/>
        <dbReference type="ChEBI" id="CHEBI:58772"/>
        <dbReference type="EC" id="1.8.4.11"/>
    </reaction>
</comment>
<comment type="similarity">
    <text evidence="1">Belongs to the MsrA Met sulfoxide reductase family.</text>
</comment>